<keyword id="KW-0548">Nucleotidyltransferase</keyword>
<keyword id="KW-0808">Transferase</keyword>
<evidence type="ECO:0000255" key="1">
    <source>
        <dbReference type="HAMAP-Rule" id="MF_00398"/>
    </source>
</evidence>
<protein>
    <recommendedName>
        <fullName>Apo-citrate lyase phosphoribosyl-dephospho-CoA transferase</fullName>
        <ecNumber evidence="1">2.7.7.61</ecNumber>
    </recommendedName>
    <alternativeName>
        <fullName evidence="1">Apo-ACP nucleodityltransferase</fullName>
    </alternativeName>
    <alternativeName>
        <fullName evidence="1">Holo-ACP synthase</fullName>
    </alternativeName>
    <alternativeName>
        <fullName evidence="1">Holo-citrate lyase synthase</fullName>
    </alternativeName>
</protein>
<sequence>MHLLPELASHHAVSIPELLVSRDERQARQHVWLKRHPVPLVSFTVVAPGPIKDSEVTRRIFNHGVTALRALAAKQGWQIQEQAALVSASGPEGMLSIAAPARDLKLATIELEHSHPLGRLWDIDVLTPEGEILSRRDYSLPPRRCLLCEQSAAVCARGKTHQLTDLLNRMEALLNDVDACNVN</sequence>
<comment type="function">
    <text evidence="1">Transfers 2-(5''-triphosphoribosyl)-3'-dephosphocoenzyme-A on a serine residue to the apo-acyl carrier protein (gamma chain) of the citrate lyase to yield holo-acyl carrier protein.</text>
</comment>
<comment type="catalytic activity">
    <reaction evidence="1">
        <text>apo-[citrate lyase ACP] + 2'-(5''-triphospho-alpha-D-ribosyl)-3'-dephospho-CoA = holo-[citrate lyase ACP] + diphosphate</text>
        <dbReference type="Rhea" id="RHEA:16333"/>
        <dbReference type="Rhea" id="RHEA-COMP:10157"/>
        <dbReference type="Rhea" id="RHEA-COMP:10158"/>
        <dbReference type="ChEBI" id="CHEBI:29999"/>
        <dbReference type="ChEBI" id="CHEBI:33019"/>
        <dbReference type="ChEBI" id="CHEBI:61378"/>
        <dbReference type="ChEBI" id="CHEBI:82683"/>
        <dbReference type="EC" id="2.7.7.61"/>
    </reaction>
</comment>
<comment type="similarity">
    <text evidence="1">Belongs to the CitX family.</text>
</comment>
<gene>
    <name evidence="1" type="primary">citX</name>
    <name type="ordered locus">ECH74115_0702</name>
</gene>
<feature type="chain" id="PRO_1000189602" description="Apo-citrate lyase phosphoribosyl-dephospho-CoA transferase">
    <location>
        <begin position="1"/>
        <end position="183"/>
    </location>
</feature>
<organism>
    <name type="scientific">Escherichia coli O157:H7 (strain EC4115 / EHEC)</name>
    <dbReference type="NCBI Taxonomy" id="444450"/>
    <lineage>
        <taxon>Bacteria</taxon>
        <taxon>Pseudomonadati</taxon>
        <taxon>Pseudomonadota</taxon>
        <taxon>Gammaproteobacteria</taxon>
        <taxon>Enterobacterales</taxon>
        <taxon>Enterobacteriaceae</taxon>
        <taxon>Escherichia</taxon>
    </lineage>
</organism>
<dbReference type="EC" id="2.7.7.61" evidence="1"/>
<dbReference type="EMBL" id="CP001164">
    <property type="protein sequence ID" value="ACI38954.1"/>
    <property type="molecule type" value="Genomic_DNA"/>
</dbReference>
<dbReference type="RefSeq" id="WP_000550422.1">
    <property type="nucleotide sequence ID" value="NC_011353.1"/>
</dbReference>
<dbReference type="SMR" id="B5YPW2"/>
<dbReference type="GeneID" id="93776871"/>
<dbReference type="KEGG" id="ecf:ECH74115_0702"/>
<dbReference type="HOGENOM" id="CLU_104529_1_1_6"/>
<dbReference type="GO" id="GO:0050519">
    <property type="term" value="F:holo-citrate lyase synthase activity"/>
    <property type="evidence" value="ECO:0007669"/>
    <property type="project" value="UniProtKB-UniRule"/>
</dbReference>
<dbReference type="GO" id="GO:0051191">
    <property type="term" value="P:prosthetic group biosynthetic process"/>
    <property type="evidence" value="ECO:0007669"/>
    <property type="project" value="InterPro"/>
</dbReference>
<dbReference type="HAMAP" id="MF_00398">
    <property type="entry name" value="CitX"/>
    <property type="match status" value="1"/>
</dbReference>
<dbReference type="InterPro" id="IPR005551">
    <property type="entry name" value="CitX"/>
</dbReference>
<dbReference type="NCBIfam" id="TIGR03124">
    <property type="entry name" value="citrate_citX"/>
    <property type="match status" value="1"/>
</dbReference>
<dbReference type="NCBIfam" id="NF002383">
    <property type="entry name" value="PRK01392.1"/>
    <property type="match status" value="1"/>
</dbReference>
<dbReference type="Pfam" id="PF03802">
    <property type="entry name" value="CitX"/>
    <property type="match status" value="1"/>
</dbReference>
<reference key="1">
    <citation type="journal article" date="2011" name="Proc. Natl. Acad. Sci. U.S.A.">
        <title>Genomic anatomy of Escherichia coli O157:H7 outbreaks.</title>
        <authorList>
            <person name="Eppinger M."/>
            <person name="Mammel M.K."/>
            <person name="Leclerc J.E."/>
            <person name="Ravel J."/>
            <person name="Cebula T.A."/>
        </authorList>
    </citation>
    <scope>NUCLEOTIDE SEQUENCE [LARGE SCALE GENOMIC DNA]</scope>
    <source>
        <strain>EC4115 / EHEC</strain>
    </source>
</reference>
<accession>B5YPW2</accession>
<name>CITX_ECO5E</name>
<proteinExistence type="inferred from homology"/>